<dbReference type="EMBL" id="CP000608">
    <property type="protein sequence ID" value="ABO46227.1"/>
    <property type="molecule type" value="Genomic_DNA"/>
</dbReference>
<dbReference type="RefSeq" id="WP_003022662.1">
    <property type="nucleotide sequence ID" value="NC_009257.1"/>
</dbReference>
<dbReference type="SMR" id="A4IWC5"/>
<dbReference type="KEGG" id="ftw:FTW_0265"/>
<dbReference type="HOGENOM" id="CLU_132825_2_0_6"/>
<dbReference type="GO" id="GO:0005737">
    <property type="term" value="C:cytoplasm"/>
    <property type="evidence" value="ECO:0007669"/>
    <property type="project" value="UniProtKB-SubCell"/>
</dbReference>
<dbReference type="GO" id="GO:0005524">
    <property type="term" value="F:ATP binding"/>
    <property type="evidence" value="ECO:0007669"/>
    <property type="project" value="InterPro"/>
</dbReference>
<dbReference type="GO" id="GO:0046872">
    <property type="term" value="F:metal ion binding"/>
    <property type="evidence" value="ECO:0007669"/>
    <property type="project" value="TreeGrafter"/>
</dbReference>
<dbReference type="GO" id="GO:0044183">
    <property type="term" value="F:protein folding chaperone"/>
    <property type="evidence" value="ECO:0007669"/>
    <property type="project" value="InterPro"/>
</dbReference>
<dbReference type="GO" id="GO:0051087">
    <property type="term" value="F:protein-folding chaperone binding"/>
    <property type="evidence" value="ECO:0007669"/>
    <property type="project" value="TreeGrafter"/>
</dbReference>
<dbReference type="GO" id="GO:0051082">
    <property type="term" value="F:unfolded protein binding"/>
    <property type="evidence" value="ECO:0007669"/>
    <property type="project" value="TreeGrafter"/>
</dbReference>
<dbReference type="GO" id="GO:0051085">
    <property type="term" value="P:chaperone cofactor-dependent protein refolding"/>
    <property type="evidence" value="ECO:0007669"/>
    <property type="project" value="TreeGrafter"/>
</dbReference>
<dbReference type="CDD" id="cd00320">
    <property type="entry name" value="cpn10"/>
    <property type="match status" value="1"/>
</dbReference>
<dbReference type="FunFam" id="2.30.33.40:FF:000001">
    <property type="entry name" value="10 kDa chaperonin"/>
    <property type="match status" value="1"/>
</dbReference>
<dbReference type="Gene3D" id="2.30.33.40">
    <property type="entry name" value="GroES chaperonin"/>
    <property type="match status" value="1"/>
</dbReference>
<dbReference type="HAMAP" id="MF_00580">
    <property type="entry name" value="CH10"/>
    <property type="match status" value="1"/>
</dbReference>
<dbReference type="InterPro" id="IPR020818">
    <property type="entry name" value="Chaperonin_GroES"/>
</dbReference>
<dbReference type="InterPro" id="IPR037124">
    <property type="entry name" value="Chaperonin_GroES_sf"/>
</dbReference>
<dbReference type="InterPro" id="IPR018369">
    <property type="entry name" value="Chaprnonin_Cpn10_CS"/>
</dbReference>
<dbReference type="InterPro" id="IPR011032">
    <property type="entry name" value="GroES-like_sf"/>
</dbReference>
<dbReference type="NCBIfam" id="NF001527">
    <property type="entry name" value="PRK00364.1-2"/>
    <property type="match status" value="1"/>
</dbReference>
<dbReference type="NCBIfam" id="NF001531">
    <property type="entry name" value="PRK00364.2-2"/>
    <property type="match status" value="1"/>
</dbReference>
<dbReference type="NCBIfam" id="NF001533">
    <property type="entry name" value="PRK00364.2-4"/>
    <property type="match status" value="1"/>
</dbReference>
<dbReference type="PANTHER" id="PTHR10772">
    <property type="entry name" value="10 KDA HEAT SHOCK PROTEIN"/>
    <property type="match status" value="1"/>
</dbReference>
<dbReference type="PANTHER" id="PTHR10772:SF58">
    <property type="entry name" value="CO-CHAPERONIN GROES"/>
    <property type="match status" value="1"/>
</dbReference>
<dbReference type="Pfam" id="PF00166">
    <property type="entry name" value="Cpn10"/>
    <property type="match status" value="1"/>
</dbReference>
<dbReference type="PRINTS" id="PR00297">
    <property type="entry name" value="CHAPERONIN10"/>
</dbReference>
<dbReference type="SMART" id="SM00883">
    <property type="entry name" value="Cpn10"/>
    <property type="match status" value="1"/>
</dbReference>
<dbReference type="SUPFAM" id="SSF50129">
    <property type="entry name" value="GroES-like"/>
    <property type="match status" value="1"/>
</dbReference>
<dbReference type="PROSITE" id="PS00681">
    <property type="entry name" value="CHAPERONINS_CPN10"/>
    <property type="match status" value="1"/>
</dbReference>
<evidence type="ECO:0000255" key="1">
    <source>
        <dbReference type="HAMAP-Rule" id="MF_00580"/>
    </source>
</evidence>
<protein>
    <recommendedName>
        <fullName evidence="1">Co-chaperonin GroES</fullName>
    </recommendedName>
    <alternativeName>
        <fullName evidence="1">10 kDa chaperonin</fullName>
    </alternativeName>
    <alternativeName>
        <fullName evidence="1">Chaperonin-10</fullName>
        <shortName evidence="1">Cpn10</shortName>
    </alternativeName>
</protein>
<comment type="function">
    <text evidence="1">Together with the chaperonin GroEL, plays an essential role in assisting protein folding. The GroEL-GroES system forms a nano-cage that allows encapsulation of the non-native substrate proteins and provides a physical environment optimized to promote and accelerate protein folding. GroES binds to the apical surface of the GroEL ring, thereby capping the opening of the GroEL channel.</text>
</comment>
<comment type="subunit">
    <text evidence="1">Heptamer of 7 subunits arranged in a ring. Interacts with the chaperonin GroEL.</text>
</comment>
<comment type="subcellular location">
    <subcellularLocation>
        <location evidence="1">Cytoplasm</location>
    </subcellularLocation>
</comment>
<comment type="similarity">
    <text evidence="1">Belongs to the GroES chaperonin family.</text>
</comment>
<accession>A4IWC5</accession>
<gene>
    <name evidence="1" type="primary">groES</name>
    <name evidence="1" type="synonym">groS</name>
    <name type="ordered locus">FTW_0265</name>
</gene>
<proteinExistence type="inferred from homology"/>
<name>CH10_FRATW</name>
<organism>
    <name type="scientific">Francisella tularensis subsp. tularensis (strain WY96-3418)</name>
    <dbReference type="NCBI Taxonomy" id="418136"/>
    <lineage>
        <taxon>Bacteria</taxon>
        <taxon>Pseudomonadati</taxon>
        <taxon>Pseudomonadota</taxon>
        <taxon>Gammaproteobacteria</taxon>
        <taxon>Thiotrichales</taxon>
        <taxon>Francisellaceae</taxon>
        <taxon>Francisella</taxon>
    </lineage>
</organism>
<keyword id="KW-0143">Chaperone</keyword>
<keyword id="KW-0963">Cytoplasm</keyword>
<sequence length="95" mass="10245">MNIRPLQDRVLVRRAEEEKKSAGGIILTGSAQEKPSQGEVVAVGNGKKLDNGTTLPMDVKVGDKVLFGKYSGSEVKVGDETLLMMREEDIMGIIA</sequence>
<feature type="chain" id="PRO_1000025264" description="Co-chaperonin GroES">
    <location>
        <begin position="1"/>
        <end position="95"/>
    </location>
</feature>
<reference key="1">
    <citation type="journal article" date="2007" name="PLoS ONE">
        <title>Complete genomic characterization of a pathogenic A.II strain of Francisella tularensis subspecies tularensis.</title>
        <authorList>
            <person name="Beckstrom-Sternberg S.M."/>
            <person name="Auerbach R.K."/>
            <person name="Godbole S."/>
            <person name="Pearson J.V."/>
            <person name="Beckstrom-Sternberg J.S."/>
            <person name="Deng Z."/>
            <person name="Munk C."/>
            <person name="Kubota K."/>
            <person name="Zhou Y."/>
            <person name="Bruce D."/>
            <person name="Noronha J."/>
            <person name="Scheuermann R.H."/>
            <person name="Wang A."/>
            <person name="Wei X."/>
            <person name="Wang J."/>
            <person name="Hao J."/>
            <person name="Wagner D.M."/>
            <person name="Brettin T.S."/>
            <person name="Brown N."/>
            <person name="Gilna P."/>
            <person name="Keim P.S."/>
        </authorList>
    </citation>
    <scope>NUCLEOTIDE SEQUENCE [LARGE SCALE GENOMIC DNA]</scope>
    <source>
        <strain>WY96-3418</strain>
    </source>
</reference>